<comment type="function">
    <text>Destroys superoxide anion radicals which are normally produced within the cells and which are toxic to biological systems.</text>
</comment>
<comment type="catalytic activity">
    <reaction>
        <text>2 superoxide + 2 H(+) = H2O2 + O2</text>
        <dbReference type="Rhea" id="RHEA:20696"/>
        <dbReference type="ChEBI" id="CHEBI:15378"/>
        <dbReference type="ChEBI" id="CHEBI:15379"/>
        <dbReference type="ChEBI" id="CHEBI:16240"/>
        <dbReference type="ChEBI" id="CHEBI:18421"/>
        <dbReference type="EC" id="1.15.1.1"/>
    </reaction>
</comment>
<comment type="cofactor">
    <cofactor evidence="1">
        <name>Mn(2+)</name>
        <dbReference type="ChEBI" id="CHEBI:29035"/>
    </cofactor>
    <text evidence="1">Binds 1 Mn(2+) ion per subunit.</text>
</comment>
<comment type="similarity">
    <text evidence="2">Belongs to the iron/manganese superoxide dismutase family.</text>
</comment>
<feature type="initiator methionine" description="Removed" evidence="1">
    <location>
        <position position="1"/>
    </location>
</feature>
<feature type="chain" id="PRO_0000160061" description="Superoxide dismutase [Mn]">
    <location>
        <begin position="2"/>
        <end position="207"/>
    </location>
</feature>
<feature type="binding site" evidence="1">
    <location>
        <position position="28"/>
    </location>
    <ligand>
        <name>Mn(2+)</name>
        <dbReference type="ChEBI" id="CHEBI:29035"/>
    </ligand>
</feature>
<feature type="binding site" evidence="1">
    <location>
        <position position="76"/>
    </location>
    <ligand>
        <name>Mn(2+)</name>
        <dbReference type="ChEBI" id="CHEBI:29035"/>
    </ligand>
</feature>
<feature type="binding site" evidence="1">
    <location>
        <position position="160"/>
    </location>
    <ligand>
        <name>Mn(2+)</name>
        <dbReference type="ChEBI" id="CHEBI:29035"/>
    </ligand>
</feature>
<feature type="binding site" evidence="1">
    <location>
        <position position="164"/>
    </location>
    <ligand>
        <name>Mn(2+)</name>
        <dbReference type="ChEBI" id="CHEBI:29035"/>
    </ligand>
</feature>
<proteinExistence type="inferred from homology"/>
<protein>
    <recommendedName>
        <fullName>Superoxide dismutase [Mn]</fullName>
        <ecNumber>1.15.1.1</ecNumber>
    </recommendedName>
</protein>
<evidence type="ECO:0000250" key="1"/>
<evidence type="ECO:0000305" key="2"/>
<dbReference type="EC" id="1.15.1.1"/>
<dbReference type="EMBL" id="U02341">
    <property type="protein sequence ID" value="AAA91964.1"/>
    <property type="molecule type" value="Genomic_DNA"/>
</dbReference>
<dbReference type="PIR" id="JC4351">
    <property type="entry name" value="JC4351"/>
</dbReference>
<dbReference type="SMR" id="P53651"/>
<dbReference type="GO" id="GO:0046872">
    <property type="term" value="F:metal ion binding"/>
    <property type="evidence" value="ECO:0007669"/>
    <property type="project" value="UniProtKB-KW"/>
</dbReference>
<dbReference type="GO" id="GO:0004784">
    <property type="term" value="F:superoxide dismutase activity"/>
    <property type="evidence" value="ECO:0007669"/>
    <property type="project" value="UniProtKB-EC"/>
</dbReference>
<dbReference type="FunFam" id="1.10.287.990:FF:000001">
    <property type="entry name" value="Superoxide dismutase"/>
    <property type="match status" value="1"/>
</dbReference>
<dbReference type="FunFam" id="3.55.40.20:FF:000004">
    <property type="entry name" value="Superoxide dismutase [Fe]"/>
    <property type="match status" value="1"/>
</dbReference>
<dbReference type="Gene3D" id="1.10.287.990">
    <property type="entry name" value="Fe,Mn superoxide dismutase (SOD) domain"/>
    <property type="match status" value="1"/>
</dbReference>
<dbReference type="Gene3D" id="3.55.40.20">
    <property type="entry name" value="Iron/manganese superoxide dismutase, C-terminal domain"/>
    <property type="match status" value="1"/>
</dbReference>
<dbReference type="InterPro" id="IPR050265">
    <property type="entry name" value="Fe/Mn_Superoxide_Dismutase"/>
</dbReference>
<dbReference type="InterPro" id="IPR001189">
    <property type="entry name" value="Mn/Fe_SOD"/>
</dbReference>
<dbReference type="InterPro" id="IPR019833">
    <property type="entry name" value="Mn/Fe_SOD_BS"/>
</dbReference>
<dbReference type="InterPro" id="IPR019832">
    <property type="entry name" value="Mn/Fe_SOD_C"/>
</dbReference>
<dbReference type="InterPro" id="IPR019831">
    <property type="entry name" value="Mn/Fe_SOD_N"/>
</dbReference>
<dbReference type="InterPro" id="IPR036324">
    <property type="entry name" value="Mn/Fe_SOD_N_sf"/>
</dbReference>
<dbReference type="InterPro" id="IPR036314">
    <property type="entry name" value="SOD_C_sf"/>
</dbReference>
<dbReference type="PANTHER" id="PTHR11404">
    <property type="entry name" value="SUPEROXIDE DISMUTASE 2"/>
    <property type="match status" value="1"/>
</dbReference>
<dbReference type="PANTHER" id="PTHR11404:SF6">
    <property type="entry name" value="SUPEROXIDE DISMUTASE [MN], MITOCHONDRIAL"/>
    <property type="match status" value="1"/>
</dbReference>
<dbReference type="Pfam" id="PF02777">
    <property type="entry name" value="Sod_Fe_C"/>
    <property type="match status" value="1"/>
</dbReference>
<dbReference type="Pfam" id="PF00081">
    <property type="entry name" value="Sod_Fe_N"/>
    <property type="match status" value="1"/>
</dbReference>
<dbReference type="PIRSF" id="PIRSF000349">
    <property type="entry name" value="SODismutase"/>
    <property type="match status" value="1"/>
</dbReference>
<dbReference type="PRINTS" id="PR01703">
    <property type="entry name" value="MNSODISMTASE"/>
</dbReference>
<dbReference type="SUPFAM" id="SSF54719">
    <property type="entry name" value="Fe,Mn superoxide dismutase (SOD), C-terminal domain"/>
    <property type="match status" value="1"/>
</dbReference>
<dbReference type="SUPFAM" id="SSF46609">
    <property type="entry name" value="Fe,Mn superoxide dismutase (SOD), N-terminal domain"/>
    <property type="match status" value="1"/>
</dbReference>
<dbReference type="PROSITE" id="PS00088">
    <property type="entry name" value="SOD_MN"/>
    <property type="match status" value="1"/>
</dbReference>
<sequence length="207" mass="22955">MAEYTLPDLDYDYSALEPHISGQINELHHSKHHAAYVAGANTALEKLEAAREAGDHSAIFLHEKNLAFHLGGHVNHSIWWKNLSPNGGDKPVGELAAAIDDQFGSFDKFRAQFTAAANGLQGSGWAVLGYDTLGQKLLTFQLYDQQANVPLGIIPLLQVDMWEHAFYLQYKNVKADYVTAFWNVVNWADVQDRFGKAVNQGKGLIFG</sequence>
<organism>
    <name type="scientific">Nocardia asteroides</name>
    <dbReference type="NCBI Taxonomy" id="1824"/>
    <lineage>
        <taxon>Bacteria</taxon>
        <taxon>Bacillati</taxon>
        <taxon>Actinomycetota</taxon>
        <taxon>Actinomycetes</taxon>
        <taxon>Mycobacteriales</taxon>
        <taxon>Nocardiaceae</taxon>
        <taxon>Nocardia</taxon>
    </lineage>
</organism>
<keyword id="KW-0464">Manganese</keyword>
<keyword id="KW-0479">Metal-binding</keyword>
<keyword id="KW-0560">Oxidoreductase</keyword>
<gene>
    <name type="primary">sodA</name>
    <name type="synonym">sod</name>
</gene>
<accession>P53651</accession>
<reference key="1">
    <citation type="journal article" date="1995" name="Gene">
        <title>Isolation, sequencing and expression of the superoxide dismutase-encoding gene (sod) of Nocardia asteroides strain GUH-2.</title>
        <authorList>
            <person name="Alcendor D.J."/>
            <person name="Chapman G.D."/>
            <person name="Beaman B.L."/>
        </authorList>
    </citation>
    <scope>NUCLEOTIDE SEQUENCE [GENOMIC DNA]</scope>
    <source>
        <strain>GUH2</strain>
    </source>
</reference>
<name>SODM_NOCAS</name>